<gene>
    <name evidence="1" type="primary">ndhJ</name>
</gene>
<organism>
    <name type="scientific">Mesostigma viride</name>
    <name type="common">Green alga</name>
    <dbReference type="NCBI Taxonomy" id="41882"/>
    <lineage>
        <taxon>Eukaryota</taxon>
        <taxon>Viridiplantae</taxon>
        <taxon>Streptophyta</taxon>
        <taxon>Mesostigmatophyceae</taxon>
        <taxon>Mesostigmatales</taxon>
        <taxon>Mesostigmataceae</taxon>
        <taxon>Mesostigma</taxon>
    </lineage>
</organism>
<geneLocation type="chloroplast"/>
<dbReference type="EC" id="7.1.1.-" evidence="1"/>
<dbReference type="EMBL" id="AF166114">
    <property type="protein sequence ID" value="AAF43839.1"/>
    <property type="molecule type" value="Genomic_DNA"/>
</dbReference>
<dbReference type="RefSeq" id="NP_038399.2">
    <property type="nucleotide sequence ID" value="NC_002186.1"/>
</dbReference>
<dbReference type="SMR" id="Q9MUR1"/>
<dbReference type="GeneID" id="800859"/>
<dbReference type="GO" id="GO:0009535">
    <property type="term" value="C:chloroplast thylakoid membrane"/>
    <property type="evidence" value="ECO:0007669"/>
    <property type="project" value="UniProtKB-SubCell"/>
</dbReference>
<dbReference type="GO" id="GO:0008137">
    <property type="term" value="F:NADH dehydrogenase (ubiquinone) activity"/>
    <property type="evidence" value="ECO:0007669"/>
    <property type="project" value="InterPro"/>
</dbReference>
<dbReference type="GO" id="GO:0048038">
    <property type="term" value="F:quinone binding"/>
    <property type="evidence" value="ECO:0007669"/>
    <property type="project" value="UniProtKB-KW"/>
</dbReference>
<dbReference type="GO" id="GO:0019684">
    <property type="term" value="P:photosynthesis, light reaction"/>
    <property type="evidence" value="ECO:0007669"/>
    <property type="project" value="UniProtKB-UniRule"/>
</dbReference>
<dbReference type="Gene3D" id="3.30.460.80">
    <property type="entry name" value="NADH:ubiquinone oxidoreductase, 30kDa subunit"/>
    <property type="match status" value="1"/>
</dbReference>
<dbReference type="HAMAP" id="MF_01357">
    <property type="entry name" value="NDH1_NuoC"/>
    <property type="match status" value="1"/>
</dbReference>
<dbReference type="InterPro" id="IPR010218">
    <property type="entry name" value="NADH_DH_suC"/>
</dbReference>
<dbReference type="InterPro" id="IPR037232">
    <property type="entry name" value="NADH_quin_OxRdtase_su_C/D-like"/>
</dbReference>
<dbReference type="InterPro" id="IPR001268">
    <property type="entry name" value="NADH_UbQ_OxRdtase_30kDa_su"/>
</dbReference>
<dbReference type="InterPro" id="IPR020396">
    <property type="entry name" value="NADH_UbQ_OxRdtase_CS"/>
</dbReference>
<dbReference type="NCBIfam" id="NF009141">
    <property type="entry name" value="PRK12494.1"/>
    <property type="match status" value="1"/>
</dbReference>
<dbReference type="PANTHER" id="PTHR10884:SF14">
    <property type="entry name" value="NADH DEHYDROGENASE [UBIQUINONE] IRON-SULFUR PROTEIN 3, MITOCHONDRIAL"/>
    <property type="match status" value="1"/>
</dbReference>
<dbReference type="PANTHER" id="PTHR10884">
    <property type="entry name" value="NADH DEHYDROGENASE UBIQUINONE IRON-SULFUR PROTEIN 3"/>
    <property type="match status" value="1"/>
</dbReference>
<dbReference type="Pfam" id="PF00329">
    <property type="entry name" value="Complex1_30kDa"/>
    <property type="match status" value="1"/>
</dbReference>
<dbReference type="SUPFAM" id="SSF143243">
    <property type="entry name" value="Nqo5-like"/>
    <property type="match status" value="1"/>
</dbReference>
<dbReference type="PROSITE" id="PS00542">
    <property type="entry name" value="COMPLEX1_30K"/>
    <property type="match status" value="1"/>
</dbReference>
<comment type="function">
    <text evidence="1">NDH shuttles electrons from NAD(P)H:plastoquinone, via FMN and iron-sulfur (Fe-S) centers, to quinones in the photosynthetic chain and possibly in a chloroplast respiratory chain. The immediate electron acceptor for the enzyme in this species is believed to be plastoquinone. Couples the redox reaction to proton translocation, and thus conserves the redox energy in a proton gradient.</text>
</comment>
<comment type="catalytic activity">
    <reaction evidence="1">
        <text>a plastoquinone + NADH + (n+1) H(+)(in) = a plastoquinol + NAD(+) + n H(+)(out)</text>
        <dbReference type="Rhea" id="RHEA:42608"/>
        <dbReference type="Rhea" id="RHEA-COMP:9561"/>
        <dbReference type="Rhea" id="RHEA-COMP:9562"/>
        <dbReference type="ChEBI" id="CHEBI:15378"/>
        <dbReference type="ChEBI" id="CHEBI:17757"/>
        <dbReference type="ChEBI" id="CHEBI:57540"/>
        <dbReference type="ChEBI" id="CHEBI:57945"/>
        <dbReference type="ChEBI" id="CHEBI:62192"/>
    </reaction>
</comment>
<comment type="catalytic activity">
    <reaction evidence="1">
        <text>a plastoquinone + NADPH + (n+1) H(+)(in) = a plastoquinol + NADP(+) + n H(+)(out)</text>
        <dbReference type="Rhea" id="RHEA:42612"/>
        <dbReference type="Rhea" id="RHEA-COMP:9561"/>
        <dbReference type="Rhea" id="RHEA-COMP:9562"/>
        <dbReference type="ChEBI" id="CHEBI:15378"/>
        <dbReference type="ChEBI" id="CHEBI:17757"/>
        <dbReference type="ChEBI" id="CHEBI:57783"/>
        <dbReference type="ChEBI" id="CHEBI:58349"/>
        <dbReference type="ChEBI" id="CHEBI:62192"/>
    </reaction>
</comment>
<comment type="subunit">
    <text evidence="1">NDH is composed of at least 16 different subunits, 5 of which are encoded in the nucleus.</text>
</comment>
<comment type="subcellular location">
    <subcellularLocation>
        <location evidence="1">Plastid</location>
        <location evidence="1">Chloroplast thylakoid membrane</location>
        <topology evidence="1">Peripheral membrane protein</topology>
        <orientation evidence="1">Stromal side</orientation>
    </subcellularLocation>
</comment>
<comment type="similarity">
    <text evidence="1">Belongs to the complex I 30 kDa subunit family.</text>
</comment>
<proteinExistence type="inferred from homology"/>
<protein>
    <recommendedName>
        <fullName evidence="1">NAD(P)H-quinone oxidoreductase subunit J, chloroplastic</fullName>
        <ecNumber evidence="1">7.1.1.-</ecNumber>
    </recommendedName>
    <alternativeName>
        <fullName>NAD(P)H dehydrogenase subunit J</fullName>
    </alternativeName>
    <alternativeName>
        <fullName evidence="1">NADH-plastoquinone oxidoreductase subunit J</fullName>
    </alternativeName>
</protein>
<name>NDHJ_MESVI</name>
<accession>Q9MUR1</accession>
<sequence>MAQLENNSTLLVRENELKGLVSNWLIEMKLMHRPLGFDYQGVETLEVKAQNLTSVAIALYAYGFNYLRSQCAYDVSPGGDLASVYHLTKVDDNADQPQEVCIKVFVPRTKPIIPSVFWIWKTADFQERESYDMFGIYYEGHPHLKRILMPEHWIGWPLRKDYITPDFYELQDAY</sequence>
<evidence type="ECO:0000255" key="1">
    <source>
        <dbReference type="HAMAP-Rule" id="MF_01357"/>
    </source>
</evidence>
<keyword id="KW-0150">Chloroplast</keyword>
<keyword id="KW-0472">Membrane</keyword>
<keyword id="KW-0520">NAD</keyword>
<keyword id="KW-0521">NADP</keyword>
<keyword id="KW-0934">Plastid</keyword>
<keyword id="KW-0618">Plastoquinone</keyword>
<keyword id="KW-0874">Quinone</keyword>
<keyword id="KW-0793">Thylakoid</keyword>
<keyword id="KW-1278">Translocase</keyword>
<keyword id="KW-0813">Transport</keyword>
<reference key="1">
    <citation type="journal article" date="2000" name="Nature">
        <title>Ancestral chloroplast genome in Mesostigma viride reveals an early branch of green plant evolution.</title>
        <authorList>
            <person name="Lemieux C."/>
            <person name="Otis C."/>
            <person name="Turmel M."/>
        </authorList>
    </citation>
    <scope>NUCLEOTIDE SEQUENCE [LARGE SCALE GENOMIC DNA]</scope>
    <source>
        <strain>NIES-296 / KY-14 / CCMP 2046</strain>
    </source>
</reference>
<feature type="chain" id="PRO_0000118657" description="NAD(P)H-quinone oxidoreductase subunit J, chloroplastic">
    <location>
        <begin position="1"/>
        <end position="174"/>
    </location>
</feature>